<sequence length="205" mass="22515">MIGRLRGLLVEKQAPEVLIETGGVGYEVQMPLTSFYELPELNQEAVIYTHFVVREDAQLLYGFITKQERALFRLLIKTNGVGPKLALTILSGMTAGEFVKCVEHDDIATLVKLPGVGKKTAERLLVEMRDKLKSLMEASHGNEREFVLQSNYTPAPVVNTAEEDAISALLALGYKPAQASKAVSSVFEEGMDSETLIKASLKSML</sequence>
<name>RUVA_SHELP</name>
<feature type="chain" id="PRO_1000002550" description="Holliday junction branch migration complex subunit RuvA">
    <location>
        <begin position="1"/>
        <end position="205"/>
    </location>
</feature>
<feature type="region of interest" description="Domain I" evidence="1">
    <location>
        <begin position="1"/>
        <end position="64"/>
    </location>
</feature>
<feature type="region of interest" description="Domain II" evidence="1">
    <location>
        <begin position="65"/>
        <end position="143"/>
    </location>
</feature>
<feature type="region of interest" description="Flexible linker" evidence="1">
    <location>
        <begin position="144"/>
        <end position="156"/>
    </location>
</feature>
<feature type="region of interest" description="Domain III" evidence="1">
    <location>
        <begin position="157"/>
        <end position="205"/>
    </location>
</feature>
<gene>
    <name evidence="1" type="primary">ruvA</name>
    <name type="ordered locus">Shew_2076</name>
</gene>
<reference key="1">
    <citation type="submission" date="2007-03" db="EMBL/GenBank/DDBJ databases">
        <title>Complete sequence of Shewanella loihica PV-4.</title>
        <authorList>
            <consortium name="US DOE Joint Genome Institute"/>
            <person name="Copeland A."/>
            <person name="Lucas S."/>
            <person name="Lapidus A."/>
            <person name="Barry K."/>
            <person name="Detter J.C."/>
            <person name="Glavina del Rio T."/>
            <person name="Hammon N."/>
            <person name="Israni S."/>
            <person name="Dalin E."/>
            <person name="Tice H."/>
            <person name="Pitluck S."/>
            <person name="Chain P."/>
            <person name="Malfatti S."/>
            <person name="Shin M."/>
            <person name="Vergez L."/>
            <person name="Schmutz J."/>
            <person name="Larimer F."/>
            <person name="Land M."/>
            <person name="Hauser L."/>
            <person name="Kyrpides N."/>
            <person name="Mikhailova N."/>
            <person name="Romine M.F."/>
            <person name="Serres G."/>
            <person name="Fredrickson J."/>
            <person name="Tiedje J."/>
            <person name="Richardson P."/>
        </authorList>
    </citation>
    <scope>NUCLEOTIDE SEQUENCE [LARGE SCALE GENOMIC DNA]</scope>
    <source>
        <strain>ATCC BAA-1088 / PV-4</strain>
    </source>
</reference>
<dbReference type="EMBL" id="CP000606">
    <property type="protein sequence ID" value="ABO23942.1"/>
    <property type="molecule type" value="Genomic_DNA"/>
</dbReference>
<dbReference type="RefSeq" id="WP_011865874.1">
    <property type="nucleotide sequence ID" value="NC_009092.1"/>
</dbReference>
<dbReference type="SMR" id="A3QEP4"/>
<dbReference type="STRING" id="323850.Shew_2076"/>
<dbReference type="KEGG" id="slo:Shew_2076"/>
<dbReference type="eggNOG" id="COG0632">
    <property type="taxonomic scope" value="Bacteria"/>
</dbReference>
<dbReference type="HOGENOM" id="CLU_087936_0_0_6"/>
<dbReference type="OrthoDB" id="5293449at2"/>
<dbReference type="Proteomes" id="UP000001558">
    <property type="component" value="Chromosome"/>
</dbReference>
<dbReference type="GO" id="GO:0005737">
    <property type="term" value="C:cytoplasm"/>
    <property type="evidence" value="ECO:0007669"/>
    <property type="project" value="UniProtKB-SubCell"/>
</dbReference>
<dbReference type="GO" id="GO:0009379">
    <property type="term" value="C:Holliday junction helicase complex"/>
    <property type="evidence" value="ECO:0007669"/>
    <property type="project" value="InterPro"/>
</dbReference>
<dbReference type="GO" id="GO:0048476">
    <property type="term" value="C:Holliday junction resolvase complex"/>
    <property type="evidence" value="ECO:0007669"/>
    <property type="project" value="UniProtKB-UniRule"/>
</dbReference>
<dbReference type="GO" id="GO:0005524">
    <property type="term" value="F:ATP binding"/>
    <property type="evidence" value="ECO:0007669"/>
    <property type="project" value="InterPro"/>
</dbReference>
<dbReference type="GO" id="GO:0000400">
    <property type="term" value="F:four-way junction DNA binding"/>
    <property type="evidence" value="ECO:0007669"/>
    <property type="project" value="UniProtKB-UniRule"/>
</dbReference>
<dbReference type="GO" id="GO:0009378">
    <property type="term" value="F:four-way junction helicase activity"/>
    <property type="evidence" value="ECO:0007669"/>
    <property type="project" value="InterPro"/>
</dbReference>
<dbReference type="GO" id="GO:0006310">
    <property type="term" value="P:DNA recombination"/>
    <property type="evidence" value="ECO:0007669"/>
    <property type="project" value="UniProtKB-UniRule"/>
</dbReference>
<dbReference type="GO" id="GO:0006281">
    <property type="term" value="P:DNA repair"/>
    <property type="evidence" value="ECO:0007669"/>
    <property type="project" value="UniProtKB-UniRule"/>
</dbReference>
<dbReference type="CDD" id="cd14332">
    <property type="entry name" value="UBA_RuvA_C"/>
    <property type="match status" value="1"/>
</dbReference>
<dbReference type="FunFam" id="2.40.50.140:FF:000083">
    <property type="entry name" value="Holliday junction ATP-dependent DNA helicase RuvA"/>
    <property type="match status" value="1"/>
</dbReference>
<dbReference type="Gene3D" id="1.10.150.20">
    <property type="entry name" value="5' to 3' exonuclease, C-terminal subdomain"/>
    <property type="match status" value="1"/>
</dbReference>
<dbReference type="Gene3D" id="1.10.8.10">
    <property type="entry name" value="DNA helicase RuvA subunit, C-terminal domain"/>
    <property type="match status" value="1"/>
</dbReference>
<dbReference type="Gene3D" id="2.40.50.140">
    <property type="entry name" value="Nucleic acid-binding proteins"/>
    <property type="match status" value="1"/>
</dbReference>
<dbReference type="HAMAP" id="MF_00031">
    <property type="entry name" value="DNA_HJ_migration_RuvA"/>
    <property type="match status" value="1"/>
</dbReference>
<dbReference type="InterPro" id="IPR013849">
    <property type="entry name" value="DNA_helicase_Holl-junc_RuvA_I"/>
</dbReference>
<dbReference type="InterPro" id="IPR003583">
    <property type="entry name" value="Hlx-hairpin-Hlx_DNA-bd_motif"/>
</dbReference>
<dbReference type="InterPro" id="IPR012340">
    <property type="entry name" value="NA-bd_OB-fold"/>
</dbReference>
<dbReference type="InterPro" id="IPR000085">
    <property type="entry name" value="RuvA"/>
</dbReference>
<dbReference type="InterPro" id="IPR010994">
    <property type="entry name" value="RuvA_2-like"/>
</dbReference>
<dbReference type="InterPro" id="IPR011114">
    <property type="entry name" value="RuvA_C"/>
</dbReference>
<dbReference type="InterPro" id="IPR036267">
    <property type="entry name" value="RuvA_C_sf"/>
</dbReference>
<dbReference type="NCBIfam" id="TIGR00084">
    <property type="entry name" value="ruvA"/>
    <property type="match status" value="1"/>
</dbReference>
<dbReference type="Pfam" id="PF14520">
    <property type="entry name" value="HHH_5"/>
    <property type="match status" value="1"/>
</dbReference>
<dbReference type="Pfam" id="PF07499">
    <property type="entry name" value="RuvA_C"/>
    <property type="match status" value="1"/>
</dbReference>
<dbReference type="Pfam" id="PF01330">
    <property type="entry name" value="RuvA_N"/>
    <property type="match status" value="1"/>
</dbReference>
<dbReference type="SMART" id="SM00278">
    <property type="entry name" value="HhH1"/>
    <property type="match status" value="2"/>
</dbReference>
<dbReference type="SUPFAM" id="SSF46929">
    <property type="entry name" value="DNA helicase RuvA subunit, C-terminal domain"/>
    <property type="match status" value="1"/>
</dbReference>
<dbReference type="SUPFAM" id="SSF50249">
    <property type="entry name" value="Nucleic acid-binding proteins"/>
    <property type="match status" value="1"/>
</dbReference>
<dbReference type="SUPFAM" id="SSF47781">
    <property type="entry name" value="RuvA domain 2-like"/>
    <property type="match status" value="1"/>
</dbReference>
<organism>
    <name type="scientific">Shewanella loihica (strain ATCC BAA-1088 / PV-4)</name>
    <dbReference type="NCBI Taxonomy" id="323850"/>
    <lineage>
        <taxon>Bacteria</taxon>
        <taxon>Pseudomonadati</taxon>
        <taxon>Pseudomonadota</taxon>
        <taxon>Gammaproteobacteria</taxon>
        <taxon>Alteromonadales</taxon>
        <taxon>Shewanellaceae</taxon>
        <taxon>Shewanella</taxon>
    </lineage>
</organism>
<proteinExistence type="inferred from homology"/>
<accession>A3QEP4</accession>
<comment type="function">
    <text evidence="1">The RuvA-RuvB-RuvC complex processes Holliday junction (HJ) DNA during genetic recombination and DNA repair, while the RuvA-RuvB complex plays an important role in the rescue of blocked DNA replication forks via replication fork reversal (RFR). RuvA specifically binds to HJ cruciform DNA, conferring on it an open structure. The RuvB hexamer acts as an ATP-dependent pump, pulling dsDNA into and through the RuvAB complex. HJ branch migration allows RuvC to scan DNA until it finds its consensus sequence, where it cleaves and resolves the cruciform DNA.</text>
</comment>
<comment type="subunit">
    <text evidence="1">Homotetramer. Forms an RuvA(8)-RuvB(12)-Holliday junction (HJ) complex. HJ DNA is sandwiched between 2 RuvA tetramers; dsDNA enters through RuvA and exits via RuvB. An RuvB hexamer assembles on each DNA strand where it exits the tetramer. Each RuvB hexamer is contacted by two RuvA subunits (via domain III) on 2 adjacent RuvB subunits; this complex drives branch migration. In the full resolvosome a probable DNA-RuvA(4)-RuvB(12)-RuvC(2) complex forms which resolves the HJ.</text>
</comment>
<comment type="subcellular location">
    <subcellularLocation>
        <location evidence="1">Cytoplasm</location>
    </subcellularLocation>
</comment>
<comment type="domain">
    <text evidence="1">Has three domains with a flexible linker between the domains II and III and assumes an 'L' shape. Domain III is highly mobile and contacts RuvB.</text>
</comment>
<comment type="similarity">
    <text evidence="1">Belongs to the RuvA family.</text>
</comment>
<evidence type="ECO:0000255" key="1">
    <source>
        <dbReference type="HAMAP-Rule" id="MF_00031"/>
    </source>
</evidence>
<keyword id="KW-0963">Cytoplasm</keyword>
<keyword id="KW-0227">DNA damage</keyword>
<keyword id="KW-0233">DNA recombination</keyword>
<keyword id="KW-0234">DNA repair</keyword>
<keyword id="KW-0238">DNA-binding</keyword>
<keyword id="KW-1185">Reference proteome</keyword>
<protein>
    <recommendedName>
        <fullName evidence="1">Holliday junction branch migration complex subunit RuvA</fullName>
    </recommendedName>
</protein>